<reference key="1">
    <citation type="submission" date="2006-09" db="EMBL/GenBank/DDBJ databases">
        <authorList>
            <consortium name="The Klebsiella pneumonia Genome Sequencing Project"/>
            <person name="McClelland M."/>
            <person name="Sanderson E.K."/>
            <person name="Spieth J."/>
            <person name="Clifton W.S."/>
            <person name="Latreille P."/>
            <person name="Sabo A."/>
            <person name="Pepin K."/>
            <person name="Bhonagiri V."/>
            <person name="Porwollik S."/>
            <person name="Ali J."/>
            <person name="Wilson R.K."/>
        </authorList>
    </citation>
    <scope>NUCLEOTIDE SEQUENCE [LARGE SCALE GENOMIC DNA]</scope>
    <source>
        <strain>ATCC 700721 / MGH 78578</strain>
    </source>
</reference>
<organism>
    <name type="scientific">Klebsiella pneumoniae subsp. pneumoniae (strain ATCC 700721 / MGH 78578)</name>
    <dbReference type="NCBI Taxonomy" id="272620"/>
    <lineage>
        <taxon>Bacteria</taxon>
        <taxon>Pseudomonadati</taxon>
        <taxon>Pseudomonadota</taxon>
        <taxon>Gammaproteobacteria</taxon>
        <taxon>Enterobacterales</taxon>
        <taxon>Enterobacteriaceae</taxon>
        <taxon>Klebsiella/Raoultella group</taxon>
        <taxon>Klebsiella</taxon>
        <taxon>Klebsiella pneumoniae complex</taxon>
    </lineage>
</organism>
<sequence length="287" mass="31513">MAGAKEIRSKIASVQNTQKITKAMEMVAASKMRKSQERMAASRPYADTMRKVIGHLANGNLEYKHPYLEERDVKRVGYLVVSTDRGLCGGLNINLFKKLLAEMKAWSDKGVQCDLAMIGSKGVSFFNSVGGNVVAQVTGMGDNPSLSELIGPVKVMLQAYDEGRLDKLYVVSNKFINTMSQVPTITQLLPLPASEDADLKRKSWDYLYEPDPKALLDTLLRRYVESQVYQGVVENLASEQAARMVAMKAATDNGGSLIKELQLVYNKARQASITQELTEIVSGAAAV</sequence>
<accession>A6TG37</accession>
<name>ATPG_KLEP7</name>
<comment type="function">
    <text evidence="1">Produces ATP from ADP in the presence of a proton gradient across the membrane. The gamma chain is believed to be important in regulating ATPase activity and the flow of protons through the CF(0) complex.</text>
</comment>
<comment type="subunit">
    <text evidence="1">F-type ATPases have 2 components, CF(1) - the catalytic core - and CF(0) - the membrane proton channel. CF(1) has five subunits: alpha(3), beta(3), gamma(1), delta(1), epsilon(1). CF(0) has three main subunits: a, b and c.</text>
</comment>
<comment type="subcellular location">
    <subcellularLocation>
        <location evidence="1">Cell inner membrane</location>
        <topology evidence="1">Peripheral membrane protein</topology>
    </subcellularLocation>
</comment>
<comment type="similarity">
    <text evidence="1">Belongs to the ATPase gamma chain family.</text>
</comment>
<gene>
    <name evidence="1" type="primary">atpG</name>
    <name type="ordered locus">KPN78578_40970</name>
    <name type="ORF">KPN_04138</name>
</gene>
<proteinExistence type="inferred from homology"/>
<feature type="chain" id="PRO_1000053232" description="ATP synthase gamma chain">
    <location>
        <begin position="1"/>
        <end position="287"/>
    </location>
</feature>
<evidence type="ECO:0000255" key="1">
    <source>
        <dbReference type="HAMAP-Rule" id="MF_00815"/>
    </source>
</evidence>
<keyword id="KW-0066">ATP synthesis</keyword>
<keyword id="KW-0997">Cell inner membrane</keyword>
<keyword id="KW-1003">Cell membrane</keyword>
<keyword id="KW-0139">CF(1)</keyword>
<keyword id="KW-0375">Hydrogen ion transport</keyword>
<keyword id="KW-0406">Ion transport</keyword>
<keyword id="KW-0472">Membrane</keyword>
<keyword id="KW-0813">Transport</keyword>
<dbReference type="EMBL" id="CP000647">
    <property type="protein sequence ID" value="ABR79521.1"/>
    <property type="molecule type" value="Genomic_DNA"/>
</dbReference>
<dbReference type="RefSeq" id="WP_004144996.1">
    <property type="nucleotide sequence ID" value="NC_009648.1"/>
</dbReference>
<dbReference type="SMR" id="A6TG37"/>
<dbReference type="STRING" id="272620.KPN_04138"/>
<dbReference type="jPOST" id="A6TG37"/>
<dbReference type="PaxDb" id="272620-KPN_04138"/>
<dbReference type="EnsemblBacteria" id="ABR79521">
    <property type="protein sequence ID" value="ABR79521"/>
    <property type="gene ID" value="KPN_04138"/>
</dbReference>
<dbReference type="GeneID" id="93251483"/>
<dbReference type="KEGG" id="kpn:KPN_04138"/>
<dbReference type="HOGENOM" id="CLU_050669_0_1_6"/>
<dbReference type="Proteomes" id="UP000000265">
    <property type="component" value="Chromosome"/>
</dbReference>
<dbReference type="GO" id="GO:0005886">
    <property type="term" value="C:plasma membrane"/>
    <property type="evidence" value="ECO:0007669"/>
    <property type="project" value="UniProtKB-SubCell"/>
</dbReference>
<dbReference type="GO" id="GO:0045259">
    <property type="term" value="C:proton-transporting ATP synthase complex"/>
    <property type="evidence" value="ECO:0007669"/>
    <property type="project" value="UniProtKB-KW"/>
</dbReference>
<dbReference type="GO" id="GO:0005524">
    <property type="term" value="F:ATP binding"/>
    <property type="evidence" value="ECO:0007669"/>
    <property type="project" value="UniProtKB-UniRule"/>
</dbReference>
<dbReference type="GO" id="GO:0046933">
    <property type="term" value="F:proton-transporting ATP synthase activity, rotational mechanism"/>
    <property type="evidence" value="ECO:0007669"/>
    <property type="project" value="UniProtKB-UniRule"/>
</dbReference>
<dbReference type="GO" id="GO:0042777">
    <property type="term" value="P:proton motive force-driven plasma membrane ATP synthesis"/>
    <property type="evidence" value="ECO:0007669"/>
    <property type="project" value="UniProtKB-UniRule"/>
</dbReference>
<dbReference type="CDD" id="cd12151">
    <property type="entry name" value="F1-ATPase_gamma"/>
    <property type="match status" value="1"/>
</dbReference>
<dbReference type="FunFam" id="1.10.287.80:FF:000005">
    <property type="entry name" value="ATP synthase gamma chain"/>
    <property type="match status" value="2"/>
</dbReference>
<dbReference type="FunFam" id="3.40.1380.10:FF:000001">
    <property type="entry name" value="ATP synthase gamma chain"/>
    <property type="match status" value="1"/>
</dbReference>
<dbReference type="Gene3D" id="3.40.1380.10">
    <property type="match status" value="1"/>
</dbReference>
<dbReference type="Gene3D" id="1.10.287.80">
    <property type="entry name" value="ATP synthase, gamma subunit, helix hairpin domain"/>
    <property type="match status" value="1"/>
</dbReference>
<dbReference type="HAMAP" id="MF_00815">
    <property type="entry name" value="ATP_synth_gamma_bact"/>
    <property type="match status" value="1"/>
</dbReference>
<dbReference type="InterPro" id="IPR035968">
    <property type="entry name" value="ATP_synth_F1_ATPase_gsu"/>
</dbReference>
<dbReference type="InterPro" id="IPR000131">
    <property type="entry name" value="ATP_synth_F1_gsu"/>
</dbReference>
<dbReference type="InterPro" id="IPR023632">
    <property type="entry name" value="ATP_synth_F1_gsu_CS"/>
</dbReference>
<dbReference type="NCBIfam" id="TIGR01146">
    <property type="entry name" value="ATPsyn_F1gamma"/>
    <property type="match status" value="1"/>
</dbReference>
<dbReference type="NCBIfam" id="NF004144">
    <property type="entry name" value="PRK05621.1-1"/>
    <property type="match status" value="1"/>
</dbReference>
<dbReference type="PANTHER" id="PTHR11693">
    <property type="entry name" value="ATP SYNTHASE GAMMA CHAIN"/>
    <property type="match status" value="1"/>
</dbReference>
<dbReference type="PANTHER" id="PTHR11693:SF22">
    <property type="entry name" value="ATP SYNTHASE SUBUNIT GAMMA, MITOCHONDRIAL"/>
    <property type="match status" value="1"/>
</dbReference>
<dbReference type="Pfam" id="PF00231">
    <property type="entry name" value="ATP-synt"/>
    <property type="match status" value="1"/>
</dbReference>
<dbReference type="PRINTS" id="PR00126">
    <property type="entry name" value="ATPASEGAMMA"/>
</dbReference>
<dbReference type="SUPFAM" id="SSF52943">
    <property type="entry name" value="ATP synthase (F1-ATPase), gamma subunit"/>
    <property type="match status" value="1"/>
</dbReference>
<dbReference type="PROSITE" id="PS00153">
    <property type="entry name" value="ATPASE_GAMMA"/>
    <property type="match status" value="1"/>
</dbReference>
<protein>
    <recommendedName>
        <fullName evidence="1">ATP synthase gamma chain</fullName>
    </recommendedName>
    <alternativeName>
        <fullName evidence="1">ATP synthase F1 sector gamma subunit</fullName>
    </alternativeName>
    <alternativeName>
        <fullName evidence="1">F-ATPase gamma subunit</fullName>
    </alternativeName>
</protein>